<comment type="similarity">
    <text evidence="1">Belongs to the bacterial ribosomal protein bL35 family.</text>
</comment>
<gene>
    <name evidence="1" type="primary">rpmI</name>
    <name type="ordered locus">msl5059</name>
</gene>
<organism>
    <name type="scientific">Mesorhizobium japonicum (strain LMG 29417 / CECT 9101 / MAFF 303099)</name>
    <name type="common">Mesorhizobium loti (strain MAFF 303099)</name>
    <dbReference type="NCBI Taxonomy" id="266835"/>
    <lineage>
        <taxon>Bacteria</taxon>
        <taxon>Pseudomonadati</taxon>
        <taxon>Pseudomonadota</taxon>
        <taxon>Alphaproteobacteria</taxon>
        <taxon>Hyphomicrobiales</taxon>
        <taxon>Phyllobacteriaceae</taxon>
        <taxon>Mesorhizobium</taxon>
    </lineage>
</organism>
<keyword id="KW-0687">Ribonucleoprotein</keyword>
<keyword id="KW-0689">Ribosomal protein</keyword>
<name>RL35_RHILO</name>
<accession>Q98CP7</accession>
<sequence length="67" mass="7326">MPKMKTKSAAKKRFKITGTGKVLSAAAGKRHGMIKRSNKFIRNARGTMVLAEPDGKKVIKNFLPNGL</sequence>
<dbReference type="EMBL" id="BA000012">
    <property type="protein sequence ID" value="BAB51574.1"/>
    <property type="molecule type" value="Genomic_DNA"/>
</dbReference>
<dbReference type="RefSeq" id="WP_006201248.1">
    <property type="nucleotide sequence ID" value="NC_002678.2"/>
</dbReference>
<dbReference type="SMR" id="Q98CP7"/>
<dbReference type="GeneID" id="91558795"/>
<dbReference type="KEGG" id="mlo:msl5059"/>
<dbReference type="eggNOG" id="COG0291">
    <property type="taxonomic scope" value="Bacteria"/>
</dbReference>
<dbReference type="HOGENOM" id="CLU_169643_2_1_5"/>
<dbReference type="Proteomes" id="UP000000552">
    <property type="component" value="Chromosome"/>
</dbReference>
<dbReference type="GO" id="GO:0022625">
    <property type="term" value="C:cytosolic large ribosomal subunit"/>
    <property type="evidence" value="ECO:0007669"/>
    <property type="project" value="TreeGrafter"/>
</dbReference>
<dbReference type="GO" id="GO:0003735">
    <property type="term" value="F:structural constituent of ribosome"/>
    <property type="evidence" value="ECO:0007669"/>
    <property type="project" value="InterPro"/>
</dbReference>
<dbReference type="GO" id="GO:0006412">
    <property type="term" value="P:translation"/>
    <property type="evidence" value="ECO:0007669"/>
    <property type="project" value="UniProtKB-UniRule"/>
</dbReference>
<dbReference type="FunFam" id="4.10.410.60:FF:000001">
    <property type="entry name" value="50S ribosomal protein L35"/>
    <property type="match status" value="1"/>
</dbReference>
<dbReference type="Gene3D" id="4.10.410.60">
    <property type="match status" value="1"/>
</dbReference>
<dbReference type="HAMAP" id="MF_00514">
    <property type="entry name" value="Ribosomal_bL35"/>
    <property type="match status" value="1"/>
</dbReference>
<dbReference type="InterPro" id="IPR001706">
    <property type="entry name" value="Ribosomal_bL35"/>
</dbReference>
<dbReference type="InterPro" id="IPR021137">
    <property type="entry name" value="Ribosomal_bL35-like"/>
</dbReference>
<dbReference type="InterPro" id="IPR018265">
    <property type="entry name" value="Ribosomal_bL35_CS"/>
</dbReference>
<dbReference type="InterPro" id="IPR037229">
    <property type="entry name" value="Ribosomal_bL35_sf"/>
</dbReference>
<dbReference type="NCBIfam" id="TIGR00001">
    <property type="entry name" value="rpmI_bact"/>
    <property type="match status" value="1"/>
</dbReference>
<dbReference type="PANTHER" id="PTHR33343">
    <property type="entry name" value="54S RIBOSOMAL PROTEIN BL35M"/>
    <property type="match status" value="1"/>
</dbReference>
<dbReference type="PANTHER" id="PTHR33343:SF1">
    <property type="entry name" value="LARGE RIBOSOMAL SUBUNIT PROTEIN BL35M"/>
    <property type="match status" value="1"/>
</dbReference>
<dbReference type="Pfam" id="PF01632">
    <property type="entry name" value="Ribosomal_L35p"/>
    <property type="match status" value="1"/>
</dbReference>
<dbReference type="PRINTS" id="PR00064">
    <property type="entry name" value="RIBOSOMALL35"/>
</dbReference>
<dbReference type="SUPFAM" id="SSF143034">
    <property type="entry name" value="L35p-like"/>
    <property type="match status" value="1"/>
</dbReference>
<dbReference type="PROSITE" id="PS00936">
    <property type="entry name" value="RIBOSOMAL_L35"/>
    <property type="match status" value="1"/>
</dbReference>
<evidence type="ECO:0000255" key="1">
    <source>
        <dbReference type="HAMAP-Rule" id="MF_00514"/>
    </source>
</evidence>
<evidence type="ECO:0000305" key="2"/>
<reference key="1">
    <citation type="journal article" date="2000" name="DNA Res.">
        <title>Complete genome structure of the nitrogen-fixing symbiotic bacterium Mesorhizobium loti.</title>
        <authorList>
            <person name="Kaneko T."/>
            <person name="Nakamura Y."/>
            <person name="Sato S."/>
            <person name="Asamizu E."/>
            <person name="Kato T."/>
            <person name="Sasamoto S."/>
            <person name="Watanabe A."/>
            <person name="Idesawa K."/>
            <person name="Ishikawa A."/>
            <person name="Kawashima K."/>
            <person name="Kimura T."/>
            <person name="Kishida Y."/>
            <person name="Kiyokawa C."/>
            <person name="Kohara M."/>
            <person name="Matsumoto M."/>
            <person name="Matsuno A."/>
            <person name="Mochizuki Y."/>
            <person name="Nakayama S."/>
            <person name="Nakazaki N."/>
            <person name="Shimpo S."/>
            <person name="Sugimoto M."/>
            <person name="Takeuchi C."/>
            <person name="Yamada M."/>
            <person name="Tabata S."/>
        </authorList>
    </citation>
    <scope>NUCLEOTIDE SEQUENCE [LARGE SCALE GENOMIC DNA]</scope>
    <source>
        <strain>LMG 29417 / CECT 9101 / MAFF 303099</strain>
    </source>
</reference>
<proteinExistence type="inferred from homology"/>
<feature type="chain" id="PRO_0000177407" description="Large ribosomal subunit protein bL35">
    <location>
        <begin position="1"/>
        <end position="67"/>
    </location>
</feature>
<protein>
    <recommendedName>
        <fullName evidence="1">Large ribosomal subunit protein bL35</fullName>
    </recommendedName>
    <alternativeName>
        <fullName evidence="2">50S ribosomal protein L35</fullName>
    </alternativeName>
</protein>